<reference key="1">
    <citation type="journal article" date="2007" name="Genes Dev.">
        <title>New insights into Acinetobacter baumannii pathogenesis revealed by high-density pyrosequencing and transposon mutagenesis.</title>
        <authorList>
            <person name="Smith M.G."/>
            <person name="Gianoulis T.A."/>
            <person name="Pukatzki S."/>
            <person name="Mekalanos J.J."/>
            <person name="Ornston L.N."/>
            <person name="Gerstein M."/>
            <person name="Snyder M."/>
        </authorList>
    </citation>
    <scope>NUCLEOTIDE SEQUENCE [LARGE SCALE GENOMIC DNA]</scope>
    <source>
        <strain>ATCC 17978 / DSM 105126 / CIP 53.77 / LMG 1025 / NCDC KC755 / 5377</strain>
    </source>
</reference>
<sequence length="448" mass="47909">MLIQRGGLKVVAGLGISGVSAVNFLHEQGYQVAVTDSRPTPPGHDQIPAGVKTSFGQLDQELLLQAEEIILSPGLAPQLPEIQAAIAKGISVVGDIQLLRRATDVPIVAITGSNAKSTVTTLIGLMAKDAGKKVAVGGNLGRPALDLLKDQPELLVLELSSFQLETTSHLNAEVAVVLNMSEDHLDRHGNMLGYHQAKHRIFQGAKKVVFNRDDALSRPLVPDTTPMQSFGLNAPDLNQYGVLRDADGTLWLACGLQRLIKSSDLYIQGMHNVANALACLALGEAIGLPMESMLETLKQFKGLEHRCEYVKTVHDVRYYNDSKGTNVGATLAAIDGLGAAIEVKKGKVALILGGQGKGQDFSPLRSSIEKYAKVVVLIGEDAPVIEQAIQGATKILHAATLKEAVELCQRETQAEDVVLLSPACASFDMFKSYNDRGQQFVACVNSLV</sequence>
<protein>
    <recommendedName>
        <fullName evidence="1">UDP-N-acetylmuramoylalanine--D-glutamate ligase</fullName>
        <ecNumber evidence="1">6.3.2.9</ecNumber>
    </recommendedName>
    <alternativeName>
        <fullName evidence="1">D-glutamic acid-adding enzyme</fullName>
    </alternativeName>
    <alternativeName>
        <fullName evidence="1">UDP-N-acetylmuramoyl-L-alanyl-D-glutamate synthetase</fullName>
    </alternativeName>
</protein>
<comment type="function">
    <text evidence="1">Cell wall formation. Catalyzes the addition of glutamate to the nucleotide precursor UDP-N-acetylmuramoyl-L-alanine (UMA).</text>
</comment>
<comment type="catalytic activity">
    <reaction evidence="1">
        <text>UDP-N-acetyl-alpha-D-muramoyl-L-alanine + D-glutamate + ATP = UDP-N-acetyl-alpha-D-muramoyl-L-alanyl-D-glutamate + ADP + phosphate + H(+)</text>
        <dbReference type="Rhea" id="RHEA:16429"/>
        <dbReference type="ChEBI" id="CHEBI:15378"/>
        <dbReference type="ChEBI" id="CHEBI:29986"/>
        <dbReference type="ChEBI" id="CHEBI:30616"/>
        <dbReference type="ChEBI" id="CHEBI:43474"/>
        <dbReference type="ChEBI" id="CHEBI:83898"/>
        <dbReference type="ChEBI" id="CHEBI:83900"/>
        <dbReference type="ChEBI" id="CHEBI:456216"/>
        <dbReference type="EC" id="6.3.2.9"/>
    </reaction>
</comment>
<comment type="pathway">
    <text evidence="1">Cell wall biogenesis; peptidoglycan biosynthesis.</text>
</comment>
<comment type="subcellular location">
    <subcellularLocation>
        <location evidence="1">Cytoplasm</location>
    </subcellularLocation>
</comment>
<comment type="similarity">
    <text evidence="1">Belongs to the MurCDEF family.</text>
</comment>
<evidence type="ECO:0000255" key="1">
    <source>
        <dbReference type="HAMAP-Rule" id="MF_00639"/>
    </source>
</evidence>
<gene>
    <name evidence="1" type="primary">murD</name>
    <name type="ordered locus">A1S_0245</name>
</gene>
<name>MURD_ACIBT</name>
<dbReference type="EC" id="6.3.2.9" evidence="1"/>
<dbReference type="EMBL" id="CP000521">
    <property type="protein sequence ID" value="ABO10720.2"/>
    <property type="molecule type" value="Genomic_DNA"/>
</dbReference>
<dbReference type="RefSeq" id="WP_000908237.1">
    <property type="nucleotide sequence ID" value="NZ_CACVBA010000001.1"/>
</dbReference>
<dbReference type="SMR" id="A3M1C6"/>
<dbReference type="KEGG" id="acb:A1S_0245"/>
<dbReference type="HOGENOM" id="CLU_032540_1_0_6"/>
<dbReference type="UniPathway" id="UPA00219"/>
<dbReference type="GO" id="GO:0005737">
    <property type="term" value="C:cytoplasm"/>
    <property type="evidence" value="ECO:0007669"/>
    <property type="project" value="UniProtKB-SubCell"/>
</dbReference>
<dbReference type="GO" id="GO:0005524">
    <property type="term" value="F:ATP binding"/>
    <property type="evidence" value="ECO:0007669"/>
    <property type="project" value="UniProtKB-UniRule"/>
</dbReference>
<dbReference type="GO" id="GO:0008764">
    <property type="term" value="F:UDP-N-acetylmuramoylalanine-D-glutamate ligase activity"/>
    <property type="evidence" value="ECO:0007669"/>
    <property type="project" value="UniProtKB-UniRule"/>
</dbReference>
<dbReference type="GO" id="GO:0051301">
    <property type="term" value="P:cell division"/>
    <property type="evidence" value="ECO:0007669"/>
    <property type="project" value="UniProtKB-KW"/>
</dbReference>
<dbReference type="GO" id="GO:0071555">
    <property type="term" value="P:cell wall organization"/>
    <property type="evidence" value="ECO:0007669"/>
    <property type="project" value="UniProtKB-KW"/>
</dbReference>
<dbReference type="GO" id="GO:0009252">
    <property type="term" value="P:peptidoglycan biosynthetic process"/>
    <property type="evidence" value="ECO:0007669"/>
    <property type="project" value="UniProtKB-UniRule"/>
</dbReference>
<dbReference type="GO" id="GO:0008360">
    <property type="term" value="P:regulation of cell shape"/>
    <property type="evidence" value="ECO:0007669"/>
    <property type="project" value="UniProtKB-KW"/>
</dbReference>
<dbReference type="Gene3D" id="3.90.190.20">
    <property type="entry name" value="Mur ligase, C-terminal domain"/>
    <property type="match status" value="1"/>
</dbReference>
<dbReference type="Gene3D" id="3.40.1190.10">
    <property type="entry name" value="Mur-like, catalytic domain"/>
    <property type="match status" value="1"/>
</dbReference>
<dbReference type="Gene3D" id="3.40.50.720">
    <property type="entry name" value="NAD(P)-binding Rossmann-like Domain"/>
    <property type="match status" value="1"/>
</dbReference>
<dbReference type="HAMAP" id="MF_00639">
    <property type="entry name" value="MurD"/>
    <property type="match status" value="1"/>
</dbReference>
<dbReference type="InterPro" id="IPR036565">
    <property type="entry name" value="Mur-like_cat_sf"/>
</dbReference>
<dbReference type="InterPro" id="IPR004101">
    <property type="entry name" value="Mur_ligase_C"/>
</dbReference>
<dbReference type="InterPro" id="IPR036615">
    <property type="entry name" value="Mur_ligase_C_dom_sf"/>
</dbReference>
<dbReference type="InterPro" id="IPR013221">
    <property type="entry name" value="Mur_ligase_cen"/>
</dbReference>
<dbReference type="InterPro" id="IPR005762">
    <property type="entry name" value="MurD"/>
</dbReference>
<dbReference type="NCBIfam" id="TIGR01087">
    <property type="entry name" value="murD"/>
    <property type="match status" value="1"/>
</dbReference>
<dbReference type="PANTHER" id="PTHR43692">
    <property type="entry name" value="UDP-N-ACETYLMURAMOYLALANINE--D-GLUTAMATE LIGASE"/>
    <property type="match status" value="1"/>
</dbReference>
<dbReference type="PANTHER" id="PTHR43692:SF1">
    <property type="entry name" value="UDP-N-ACETYLMURAMOYLALANINE--D-GLUTAMATE LIGASE"/>
    <property type="match status" value="1"/>
</dbReference>
<dbReference type="Pfam" id="PF02875">
    <property type="entry name" value="Mur_ligase_C"/>
    <property type="match status" value="1"/>
</dbReference>
<dbReference type="Pfam" id="PF08245">
    <property type="entry name" value="Mur_ligase_M"/>
    <property type="match status" value="1"/>
</dbReference>
<dbReference type="Pfam" id="PF21799">
    <property type="entry name" value="MurD-like_N"/>
    <property type="match status" value="1"/>
</dbReference>
<dbReference type="SUPFAM" id="SSF51984">
    <property type="entry name" value="MurCD N-terminal domain"/>
    <property type="match status" value="1"/>
</dbReference>
<dbReference type="SUPFAM" id="SSF53623">
    <property type="entry name" value="MurD-like peptide ligases, catalytic domain"/>
    <property type="match status" value="1"/>
</dbReference>
<dbReference type="SUPFAM" id="SSF53244">
    <property type="entry name" value="MurD-like peptide ligases, peptide-binding domain"/>
    <property type="match status" value="1"/>
</dbReference>
<organism>
    <name type="scientific">Acinetobacter baumannii (strain ATCC 17978 / DSM 105126 / CIP 53.77 / LMG 1025 / NCDC KC755 / 5377)</name>
    <dbReference type="NCBI Taxonomy" id="400667"/>
    <lineage>
        <taxon>Bacteria</taxon>
        <taxon>Pseudomonadati</taxon>
        <taxon>Pseudomonadota</taxon>
        <taxon>Gammaproteobacteria</taxon>
        <taxon>Moraxellales</taxon>
        <taxon>Moraxellaceae</taxon>
        <taxon>Acinetobacter</taxon>
        <taxon>Acinetobacter calcoaceticus/baumannii complex</taxon>
    </lineage>
</organism>
<keyword id="KW-0067">ATP-binding</keyword>
<keyword id="KW-0131">Cell cycle</keyword>
<keyword id="KW-0132">Cell division</keyword>
<keyword id="KW-0133">Cell shape</keyword>
<keyword id="KW-0961">Cell wall biogenesis/degradation</keyword>
<keyword id="KW-0963">Cytoplasm</keyword>
<keyword id="KW-0436">Ligase</keyword>
<keyword id="KW-0547">Nucleotide-binding</keyword>
<keyword id="KW-0573">Peptidoglycan synthesis</keyword>
<accession>A3M1C6</accession>
<feature type="chain" id="PRO_1000130822" description="UDP-N-acetylmuramoylalanine--D-glutamate ligase">
    <location>
        <begin position="1"/>
        <end position="448"/>
    </location>
</feature>
<feature type="binding site" evidence="1">
    <location>
        <begin position="112"/>
        <end position="118"/>
    </location>
    <ligand>
        <name>ATP</name>
        <dbReference type="ChEBI" id="CHEBI:30616"/>
    </ligand>
</feature>
<proteinExistence type="inferred from homology"/>